<dbReference type="EC" id="5.3.1.16" evidence="1"/>
<dbReference type="EMBL" id="AM746676">
    <property type="protein sequence ID" value="CAN92972.1"/>
    <property type="molecule type" value="Genomic_DNA"/>
</dbReference>
<dbReference type="RefSeq" id="WP_012235445.1">
    <property type="nucleotide sequence ID" value="NC_010162.1"/>
</dbReference>
<dbReference type="SMR" id="A9GB86"/>
<dbReference type="STRING" id="448385.sce2813"/>
<dbReference type="KEGG" id="scl:sce2813"/>
<dbReference type="eggNOG" id="COG0106">
    <property type="taxonomic scope" value="Bacteria"/>
</dbReference>
<dbReference type="HOGENOM" id="CLU_048577_1_1_7"/>
<dbReference type="OrthoDB" id="9807749at2"/>
<dbReference type="BioCyc" id="SCEL448385:SCE_RS14430-MONOMER"/>
<dbReference type="UniPathway" id="UPA00031">
    <property type="reaction ID" value="UER00009"/>
</dbReference>
<dbReference type="Proteomes" id="UP000002139">
    <property type="component" value="Chromosome"/>
</dbReference>
<dbReference type="GO" id="GO:0005737">
    <property type="term" value="C:cytoplasm"/>
    <property type="evidence" value="ECO:0007669"/>
    <property type="project" value="UniProtKB-SubCell"/>
</dbReference>
<dbReference type="GO" id="GO:0003949">
    <property type="term" value="F:1-(5-phosphoribosyl)-5-[(5-phosphoribosylamino)methylideneamino]imidazole-4-carboxamide isomerase activity"/>
    <property type="evidence" value="ECO:0007669"/>
    <property type="project" value="UniProtKB-UniRule"/>
</dbReference>
<dbReference type="GO" id="GO:0000105">
    <property type="term" value="P:L-histidine biosynthetic process"/>
    <property type="evidence" value="ECO:0007669"/>
    <property type="project" value="UniProtKB-UniRule"/>
</dbReference>
<dbReference type="GO" id="GO:0000162">
    <property type="term" value="P:L-tryptophan biosynthetic process"/>
    <property type="evidence" value="ECO:0007669"/>
    <property type="project" value="TreeGrafter"/>
</dbReference>
<dbReference type="CDD" id="cd04732">
    <property type="entry name" value="HisA"/>
    <property type="match status" value="1"/>
</dbReference>
<dbReference type="FunFam" id="3.20.20.70:FF:000009">
    <property type="entry name" value="1-(5-phosphoribosyl)-5-[(5-phosphoribosylamino)methylideneamino] imidazole-4-carboxamide isomerase"/>
    <property type="match status" value="1"/>
</dbReference>
<dbReference type="Gene3D" id="3.20.20.70">
    <property type="entry name" value="Aldolase class I"/>
    <property type="match status" value="1"/>
</dbReference>
<dbReference type="HAMAP" id="MF_01014">
    <property type="entry name" value="HisA"/>
    <property type="match status" value="1"/>
</dbReference>
<dbReference type="InterPro" id="IPR013785">
    <property type="entry name" value="Aldolase_TIM"/>
</dbReference>
<dbReference type="InterPro" id="IPR006062">
    <property type="entry name" value="His_biosynth"/>
</dbReference>
<dbReference type="InterPro" id="IPR006063">
    <property type="entry name" value="HisA_bact_arch"/>
</dbReference>
<dbReference type="InterPro" id="IPR044524">
    <property type="entry name" value="Isoase_HisA-like"/>
</dbReference>
<dbReference type="InterPro" id="IPR023016">
    <property type="entry name" value="Isoase_HisA-like_bact"/>
</dbReference>
<dbReference type="InterPro" id="IPR011060">
    <property type="entry name" value="RibuloseP-bd_barrel"/>
</dbReference>
<dbReference type="NCBIfam" id="TIGR00007">
    <property type="entry name" value="1-(5-phosphoribosyl)-5-[(5-phosphoribosylamino)methylideneamino]imidazole-4-carboxamide isomerase"/>
    <property type="match status" value="1"/>
</dbReference>
<dbReference type="PANTHER" id="PTHR43090">
    <property type="entry name" value="1-(5-PHOSPHORIBOSYL)-5-[(5-PHOSPHORIBOSYLAMINO)METHYLIDENEAMINO] IMIDAZOLE-4-CARBOXAMIDE ISOMERASE"/>
    <property type="match status" value="1"/>
</dbReference>
<dbReference type="PANTHER" id="PTHR43090:SF2">
    <property type="entry name" value="1-(5-PHOSPHORIBOSYL)-5-[(5-PHOSPHORIBOSYLAMINO)METHYLIDENEAMINO] IMIDAZOLE-4-CARBOXAMIDE ISOMERASE"/>
    <property type="match status" value="1"/>
</dbReference>
<dbReference type="Pfam" id="PF00977">
    <property type="entry name" value="His_biosynth"/>
    <property type="match status" value="1"/>
</dbReference>
<dbReference type="SUPFAM" id="SSF51366">
    <property type="entry name" value="Ribulose-phoshate binding barrel"/>
    <property type="match status" value="1"/>
</dbReference>
<keyword id="KW-0028">Amino-acid biosynthesis</keyword>
<keyword id="KW-0963">Cytoplasm</keyword>
<keyword id="KW-0368">Histidine biosynthesis</keyword>
<keyword id="KW-0413">Isomerase</keyword>
<keyword id="KW-1185">Reference proteome</keyword>
<organism>
    <name type="scientific">Sorangium cellulosum (strain So ce56)</name>
    <name type="common">Polyangium cellulosum (strain So ce56)</name>
    <dbReference type="NCBI Taxonomy" id="448385"/>
    <lineage>
        <taxon>Bacteria</taxon>
        <taxon>Pseudomonadati</taxon>
        <taxon>Myxococcota</taxon>
        <taxon>Polyangia</taxon>
        <taxon>Polyangiales</taxon>
        <taxon>Polyangiaceae</taxon>
        <taxon>Sorangium</taxon>
    </lineage>
</organism>
<evidence type="ECO:0000255" key="1">
    <source>
        <dbReference type="HAMAP-Rule" id="MF_01014"/>
    </source>
</evidence>
<feature type="chain" id="PRO_1000084116" description="1-(5-phosphoribosyl)-5-[(5-phosphoribosylamino)methylideneamino] imidazole-4-carboxamide isomerase">
    <location>
        <begin position="1"/>
        <end position="241"/>
    </location>
</feature>
<feature type="active site" description="Proton acceptor" evidence="1">
    <location>
        <position position="8"/>
    </location>
</feature>
<feature type="active site" description="Proton donor" evidence="1">
    <location>
        <position position="131"/>
    </location>
</feature>
<proteinExistence type="inferred from homology"/>
<accession>A9GB86</accession>
<sequence length="241" mass="24377">MQLIPAIDLLGGQAVRLHQGRYDQVTVYDQDPAALAARLRRACARLHVVDLEGARAGLPVQADAVRAVIAAFGAEGGSVQVGGGIRSAAAAESYLALGADRIVLGTAAVNDPALVRDLAGRFPGRVVVAVDAKDGRVAVQGWEQVSSVTALDVARALAGAPVAALLYTDVSRDGTQVGPNLEATRELAASCGFPVLASGGVGSLAHLRALAQIPGVSGVIVGRALYEGAFTLAEAIEAASA</sequence>
<comment type="catalytic activity">
    <reaction evidence="1">
        <text>1-(5-phospho-beta-D-ribosyl)-5-[(5-phospho-beta-D-ribosylamino)methylideneamino]imidazole-4-carboxamide = 5-[(5-phospho-1-deoxy-D-ribulos-1-ylimino)methylamino]-1-(5-phospho-beta-D-ribosyl)imidazole-4-carboxamide</text>
        <dbReference type="Rhea" id="RHEA:15469"/>
        <dbReference type="ChEBI" id="CHEBI:58435"/>
        <dbReference type="ChEBI" id="CHEBI:58525"/>
        <dbReference type="EC" id="5.3.1.16"/>
    </reaction>
</comment>
<comment type="pathway">
    <text evidence="1">Amino-acid biosynthesis; L-histidine biosynthesis; L-histidine from 5-phospho-alpha-D-ribose 1-diphosphate: step 4/9.</text>
</comment>
<comment type="subcellular location">
    <subcellularLocation>
        <location evidence="1">Cytoplasm</location>
    </subcellularLocation>
</comment>
<comment type="similarity">
    <text evidence="1">Belongs to the HisA/HisF family.</text>
</comment>
<gene>
    <name evidence="1" type="primary">hisA</name>
    <name type="ordered locus">sce2813</name>
</gene>
<reference key="1">
    <citation type="journal article" date="2007" name="Nat. Biotechnol.">
        <title>Complete genome sequence of the myxobacterium Sorangium cellulosum.</title>
        <authorList>
            <person name="Schneiker S."/>
            <person name="Perlova O."/>
            <person name="Kaiser O."/>
            <person name="Gerth K."/>
            <person name="Alici A."/>
            <person name="Altmeyer M.O."/>
            <person name="Bartels D."/>
            <person name="Bekel T."/>
            <person name="Beyer S."/>
            <person name="Bode E."/>
            <person name="Bode H.B."/>
            <person name="Bolten C.J."/>
            <person name="Choudhuri J.V."/>
            <person name="Doss S."/>
            <person name="Elnakady Y.A."/>
            <person name="Frank B."/>
            <person name="Gaigalat L."/>
            <person name="Goesmann A."/>
            <person name="Groeger C."/>
            <person name="Gross F."/>
            <person name="Jelsbak L."/>
            <person name="Jelsbak L."/>
            <person name="Kalinowski J."/>
            <person name="Kegler C."/>
            <person name="Knauber T."/>
            <person name="Konietzny S."/>
            <person name="Kopp M."/>
            <person name="Krause L."/>
            <person name="Krug D."/>
            <person name="Linke B."/>
            <person name="Mahmud T."/>
            <person name="Martinez-Arias R."/>
            <person name="McHardy A.C."/>
            <person name="Merai M."/>
            <person name="Meyer F."/>
            <person name="Mormann S."/>
            <person name="Munoz-Dorado J."/>
            <person name="Perez J."/>
            <person name="Pradella S."/>
            <person name="Rachid S."/>
            <person name="Raddatz G."/>
            <person name="Rosenau F."/>
            <person name="Rueckert C."/>
            <person name="Sasse F."/>
            <person name="Scharfe M."/>
            <person name="Schuster S.C."/>
            <person name="Suen G."/>
            <person name="Treuner-Lange A."/>
            <person name="Velicer G.J."/>
            <person name="Vorholter F.-J."/>
            <person name="Weissman K.J."/>
            <person name="Welch R.D."/>
            <person name="Wenzel S.C."/>
            <person name="Whitworth D.E."/>
            <person name="Wilhelm S."/>
            <person name="Wittmann C."/>
            <person name="Bloecker H."/>
            <person name="Puehler A."/>
            <person name="Mueller R."/>
        </authorList>
    </citation>
    <scope>NUCLEOTIDE SEQUENCE [LARGE SCALE GENOMIC DNA]</scope>
    <source>
        <strain>So ce56</strain>
    </source>
</reference>
<protein>
    <recommendedName>
        <fullName evidence="1">1-(5-phosphoribosyl)-5-[(5-phosphoribosylamino)methylideneamino] imidazole-4-carboxamide isomerase</fullName>
        <ecNumber evidence="1">5.3.1.16</ecNumber>
    </recommendedName>
    <alternativeName>
        <fullName evidence="1">Phosphoribosylformimino-5-aminoimidazole carboxamide ribotide isomerase</fullName>
    </alternativeName>
</protein>
<name>HIS4_SORC5</name>